<name>ERD21_MOUSE</name>
<evidence type="ECO:0000250" key="1"/>
<evidence type="ECO:0000250" key="2">
    <source>
        <dbReference type="UniProtKB" id="P24390"/>
    </source>
</evidence>
<evidence type="ECO:0000250" key="3">
    <source>
        <dbReference type="UniProtKB" id="P33946"/>
    </source>
</evidence>
<evidence type="ECO:0000250" key="4">
    <source>
        <dbReference type="UniProtKB" id="P33947"/>
    </source>
</evidence>
<evidence type="ECO:0000250" key="5">
    <source>
        <dbReference type="UniProtKB" id="Q5ZKX9"/>
    </source>
</evidence>
<evidence type="ECO:0000303" key="6">
    <source ref="1"/>
</evidence>
<evidence type="ECO:0000305" key="7"/>
<accession>Q99JH8</accession>
<keyword id="KW-0968">Cytoplasmic vesicle</keyword>
<keyword id="KW-0256">Endoplasmic reticulum</keyword>
<keyword id="KW-0931">ER-Golgi transport</keyword>
<keyword id="KW-0333">Golgi apparatus</keyword>
<keyword id="KW-0472">Membrane</keyword>
<keyword id="KW-0597">Phosphoprotein</keyword>
<keyword id="KW-0653">Protein transport</keyword>
<keyword id="KW-0675">Receptor</keyword>
<keyword id="KW-1185">Reference proteome</keyword>
<keyword id="KW-0812">Transmembrane</keyword>
<keyword id="KW-1133">Transmembrane helix</keyword>
<keyword id="KW-0813">Transport</keyword>
<feature type="chain" id="PRO_0000194154" description="ER lumen protein-retaining receptor 1">
    <location>
        <begin position="1"/>
        <end position="212"/>
    </location>
</feature>
<feature type="topological domain" description="Lumenal" evidence="7">
    <location>
        <begin position="1"/>
        <end position="4"/>
    </location>
</feature>
<feature type="transmembrane region" description="Helical" evidence="5">
    <location>
        <begin position="5"/>
        <end position="24"/>
    </location>
</feature>
<feature type="topological domain" description="Cytoplasmic" evidence="7">
    <location>
        <begin position="25"/>
        <end position="32"/>
    </location>
</feature>
<feature type="transmembrane region" description="Helical" evidence="5">
    <location>
        <begin position="33"/>
        <end position="52"/>
    </location>
</feature>
<feature type="topological domain" description="Lumenal" evidence="7">
    <location>
        <begin position="53"/>
        <end position="58"/>
    </location>
</feature>
<feature type="transmembrane region" description="Helical" evidence="5">
    <location>
        <begin position="59"/>
        <end position="79"/>
    </location>
</feature>
<feature type="topological domain" description="Cytoplasmic" evidence="7">
    <location>
        <begin position="80"/>
        <end position="92"/>
    </location>
</feature>
<feature type="transmembrane region" description="Helical" evidence="5">
    <location>
        <begin position="93"/>
        <end position="110"/>
    </location>
</feature>
<feature type="topological domain" description="Lumenal" evidence="7">
    <location>
        <begin position="111"/>
        <end position="116"/>
    </location>
</feature>
<feature type="transmembrane region" description="Helical" evidence="5">
    <location>
        <begin position="117"/>
        <end position="135"/>
    </location>
</feature>
<feature type="topological domain" description="Cytoplasmic" evidence="7">
    <location>
        <begin position="136"/>
        <end position="149"/>
    </location>
</feature>
<feature type="transmembrane region" description="Helical" evidence="5">
    <location>
        <begin position="150"/>
        <end position="168"/>
    </location>
</feature>
<feature type="topological domain" description="Lumenal" evidence="7">
    <location>
        <begin position="169"/>
        <end position="178"/>
    </location>
</feature>
<feature type="transmembrane region" description="Helical" evidence="5">
    <location>
        <begin position="179"/>
        <end position="199"/>
    </location>
</feature>
<feature type="topological domain" description="Cytoplasmic" evidence="7">
    <location>
        <begin position="200"/>
        <end position="212"/>
    </location>
</feature>
<feature type="region of interest" description="Interaction with the K-D-E-L motif on target proteins" evidence="5">
    <location>
        <begin position="47"/>
        <end position="48"/>
    </location>
</feature>
<feature type="region of interest" description="Interaction with the K-D-E-L motif on target proteins" evidence="5">
    <location>
        <begin position="159"/>
        <end position="169"/>
    </location>
</feature>
<feature type="region of interest" description="Important for recycling of cargo proteins with the sequence motif K-D-E-L from the Golgi to the endoplasmic reticulum" evidence="4">
    <location>
        <begin position="204"/>
        <end position="207"/>
    </location>
</feature>
<feature type="site" description="Interaction with the K-D-E-L motif on target proteins" evidence="5">
    <location>
        <position position="5"/>
    </location>
</feature>
<feature type="site" description="Interaction with the K-D-E-L motif on target proteins" evidence="5">
    <location>
        <position position="117"/>
    </location>
</feature>
<feature type="site" description="Important for recycling of cargo proteins with the sequence motif K-D-E-L from the Golgi to the endoplasmic reticulum" evidence="2">
    <location>
        <position position="193"/>
    </location>
</feature>
<feature type="modified residue" description="Phosphoserine; by PKA" evidence="2">
    <location>
        <position position="209"/>
    </location>
</feature>
<gene>
    <name type="primary">Kdelr1</name>
</gene>
<organism>
    <name type="scientific">Mus musculus</name>
    <name type="common">Mouse</name>
    <dbReference type="NCBI Taxonomy" id="10090"/>
    <lineage>
        <taxon>Eukaryota</taxon>
        <taxon>Metazoa</taxon>
        <taxon>Chordata</taxon>
        <taxon>Craniata</taxon>
        <taxon>Vertebrata</taxon>
        <taxon>Euteleostomi</taxon>
        <taxon>Mammalia</taxon>
        <taxon>Eutheria</taxon>
        <taxon>Euarchontoglires</taxon>
        <taxon>Glires</taxon>
        <taxon>Rodentia</taxon>
        <taxon>Myomorpha</taxon>
        <taxon>Muroidea</taxon>
        <taxon>Muridae</taxon>
        <taxon>Murinae</taxon>
        <taxon>Mus</taxon>
        <taxon>Mus</taxon>
    </lineage>
</organism>
<proteinExistence type="evidence at protein level"/>
<protein>
    <recommendedName>
        <fullName>ER lumen protein-retaining receptor 1</fullName>
    </recommendedName>
    <alternativeName>
        <fullName>KDEL endoplasmic reticulum protein retention receptor 1</fullName>
        <shortName evidence="6">KDEL receptor 1</shortName>
    </alternativeName>
</protein>
<dbReference type="EMBL" id="AY027435">
    <property type="protein sequence ID" value="AAK11732.1"/>
    <property type="molecule type" value="mRNA"/>
</dbReference>
<dbReference type="EMBL" id="AJ278132">
    <property type="protein sequence ID" value="CAC34584.1"/>
    <property type="molecule type" value="mRNA"/>
</dbReference>
<dbReference type="EMBL" id="BC011370">
    <property type="protein sequence ID" value="AAH11370.1"/>
    <property type="molecule type" value="mRNA"/>
</dbReference>
<dbReference type="CCDS" id="CCDS21268.1"/>
<dbReference type="RefSeq" id="NP_598711.1">
    <property type="nucleotide sequence ID" value="NM_133950.2"/>
</dbReference>
<dbReference type="SMR" id="Q99JH8"/>
<dbReference type="BioGRID" id="212676">
    <property type="interactions" value="5"/>
</dbReference>
<dbReference type="FunCoup" id="Q99JH8">
    <property type="interactions" value="1899"/>
</dbReference>
<dbReference type="STRING" id="10090.ENSMUSP00000002855"/>
<dbReference type="PhosphoSitePlus" id="Q99JH8"/>
<dbReference type="SwissPalm" id="Q99JH8"/>
<dbReference type="jPOST" id="Q99JH8"/>
<dbReference type="PaxDb" id="10090-ENSMUSP00000002855"/>
<dbReference type="PeptideAtlas" id="Q99JH8"/>
<dbReference type="ProteomicsDB" id="275533"/>
<dbReference type="Pumba" id="Q99JH8"/>
<dbReference type="TopDownProteomics" id="Q99JH8"/>
<dbReference type="ABCD" id="Q99JH8">
    <property type="antibodies" value="1 sequenced antibody"/>
</dbReference>
<dbReference type="Antibodypedia" id="3381">
    <property type="antibodies" value="168 antibodies from 27 providers"/>
</dbReference>
<dbReference type="DNASU" id="68137"/>
<dbReference type="Ensembl" id="ENSMUST00000002855.14">
    <property type="protein sequence ID" value="ENSMUSP00000002855.6"/>
    <property type="gene ID" value="ENSMUSG00000002778.15"/>
</dbReference>
<dbReference type="GeneID" id="68137"/>
<dbReference type="KEGG" id="mmu:68137"/>
<dbReference type="UCSC" id="uc009gxn.1">
    <property type="organism name" value="mouse"/>
</dbReference>
<dbReference type="AGR" id="MGI:1915387"/>
<dbReference type="CTD" id="10945"/>
<dbReference type="MGI" id="MGI:1915387">
    <property type="gene designation" value="Kdelr1"/>
</dbReference>
<dbReference type="VEuPathDB" id="HostDB:ENSMUSG00000002778"/>
<dbReference type="eggNOG" id="KOG3106">
    <property type="taxonomic scope" value="Eukaryota"/>
</dbReference>
<dbReference type="GeneTree" id="ENSGT00390000004010"/>
<dbReference type="HOGENOM" id="CLU_057784_0_0_1"/>
<dbReference type="InParanoid" id="Q99JH8"/>
<dbReference type="OMA" id="YAEDHYD"/>
<dbReference type="OrthoDB" id="7694678at2759"/>
<dbReference type="PhylomeDB" id="Q99JH8"/>
<dbReference type="TreeFam" id="TF314792"/>
<dbReference type="Reactome" id="R-MMU-6807878">
    <property type="pathway name" value="COPI-mediated anterograde transport"/>
</dbReference>
<dbReference type="Reactome" id="R-MMU-6811434">
    <property type="pathway name" value="COPI-dependent Golgi-to-ER retrograde traffic"/>
</dbReference>
<dbReference type="BioGRID-ORCS" id="68137">
    <property type="hits" value="3 hits in 80 CRISPR screens"/>
</dbReference>
<dbReference type="ChiTaRS" id="Kdelr1">
    <property type="organism name" value="mouse"/>
</dbReference>
<dbReference type="PRO" id="PR:Q99JH8"/>
<dbReference type="Proteomes" id="UP000000589">
    <property type="component" value="Chromosome 7"/>
</dbReference>
<dbReference type="RNAct" id="Q99JH8">
    <property type="molecule type" value="protein"/>
</dbReference>
<dbReference type="Bgee" id="ENSMUSG00000002778">
    <property type="expression patterns" value="Expressed in ileal epithelium and 267 other cell types or tissues"/>
</dbReference>
<dbReference type="ExpressionAtlas" id="Q99JH8">
    <property type="expression patterns" value="baseline and differential"/>
</dbReference>
<dbReference type="GO" id="GO:0005801">
    <property type="term" value="C:cis-Golgi network"/>
    <property type="evidence" value="ECO:0000314"/>
    <property type="project" value="MGI"/>
</dbReference>
<dbReference type="GO" id="GO:0030663">
    <property type="term" value="C:COPI-coated vesicle membrane"/>
    <property type="evidence" value="ECO:0007669"/>
    <property type="project" value="UniProtKB-SubCell"/>
</dbReference>
<dbReference type="GO" id="GO:0005783">
    <property type="term" value="C:endoplasmic reticulum"/>
    <property type="evidence" value="ECO:0000314"/>
    <property type="project" value="MGI"/>
</dbReference>
<dbReference type="GO" id="GO:0005789">
    <property type="term" value="C:endoplasmic reticulum membrane"/>
    <property type="evidence" value="ECO:0007669"/>
    <property type="project" value="UniProtKB-SubCell"/>
</dbReference>
<dbReference type="GO" id="GO:0033116">
    <property type="term" value="C:endoplasmic reticulum-Golgi intermediate compartment membrane"/>
    <property type="evidence" value="ECO:0007669"/>
    <property type="project" value="UniProtKB-SubCell"/>
</dbReference>
<dbReference type="GO" id="GO:0005794">
    <property type="term" value="C:Golgi apparatus"/>
    <property type="evidence" value="ECO:0000314"/>
    <property type="project" value="MGI"/>
</dbReference>
<dbReference type="GO" id="GO:0000139">
    <property type="term" value="C:Golgi membrane"/>
    <property type="evidence" value="ECO:0000250"/>
    <property type="project" value="UniProtKB"/>
</dbReference>
<dbReference type="GO" id="GO:0005046">
    <property type="term" value="F:KDEL sequence binding"/>
    <property type="evidence" value="ECO:0000250"/>
    <property type="project" value="UniProtKB"/>
</dbReference>
<dbReference type="GO" id="GO:0006621">
    <property type="term" value="P:protein retention in ER lumen"/>
    <property type="evidence" value="ECO:0007669"/>
    <property type="project" value="InterPro"/>
</dbReference>
<dbReference type="GO" id="GO:0015031">
    <property type="term" value="P:protein transport"/>
    <property type="evidence" value="ECO:0007669"/>
    <property type="project" value="UniProtKB-KW"/>
</dbReference>
<dbReference type="GO" id="GO:0006890">
    <property type="term" value="P:retrograde vesicle-mediated transport, Golgi to endoplasmic reticulum"/>
    <property type="evidence" value="ECO:0000250"/>
    <property type="project" value="UniProtKB"/>
</dbReference>
<dbReference type="GO" id="GO:0070231">
    <property type="term" value="P:T cell apoptotic process"/>
    <property type="evidence" value="ECO:0000315"/>
    <property type="project" value="MGI"/>
</dbReference>
<dbReference type="GO" id="GO:0030217">
    <property type="term" value="P:T cell differentiation"/>
    <property type="evidence" value="ECO:0000315"/>
    <property type="project" value="MGI"/>
</dbReference>
<dbReference type="InterPro" id="IPR000133">
    <property type="entry name" value="ER_ret_rcpt"/>
</dbReference>
<dbReference type="PANTHER" id="PTHR10585">
    <property type="entry name" value="ER LUMEN PROTEIN RETAINING RECEPTOR"/>
    <property type="match status" value="1"/>
</dbReference>
<dbReference type="Pfam" id="PF00810">
    <property type="entry name" value="ER_lumen_recept"/>
    <property type="match status" value="1"/>
</dbReference>
<dbReference type="PRINTS" id="PR00660">
    <property type="entry name" value="ERLUMENR"/>
</dbReference>
<dbReference type="PROSITE" id="PS00951">
    <property type="entry name" value="ER_LUMEN_RECEPTOR_1"/>
    <property type="match status" value="1"/>
</dbReference>
<dbReference type="PROSITE" id="PS00952">
    <property type="entry name" value="ER_LUMEN_RECEPTOR_2"/>
    <property type="match status" value="1"/>
</dbReference>
<comment type="function">
    <text evidence="2">Receptor for the C-terminal sequence motif K-D-E-L that is present on endoplasmic reticulum resident proteins and that mediates their recycling from the Golgi back to the endoplasmic reticulum.</text>
</comment>
<comment type="subunit">
    <text evidence="1">Upon ligand binding the receptor oligomerizes and interacts with components of the transport machinery such as ARFGAP1 and ARF1.</text>
</comment>
<comment type="subcellular location">
    <subcellularLocation>
        <location evidence="3">Golgi apparatus membrane</location>
        <topology evidence="3">Multi-pass membrane protein</topology>
    </subcellularLocation>
    <subcellularLocation>
        <location evidence="3">Cytoplasmic vesicle</location>
        <location evidence="3">COPI-coated vesicle membrane</location>
        <topology evidence="3">Multi-pass membrane protein</topology>
    </subcellularLocation>
    <subcellularLocation>
        <location evidence="3">Endoplasmic reticulum membrane</location>
        <topology evidence="3">Multi-pass membrane protein</topology>
    </subcellularLocation>
    <subcellularLocation>
        <location evidence="3">Endoplasmic reticulum-Golgi intermediate compartment membrane</location>
        <topology evidence="3">Multi-pass membrane protein</topology>
    </subcellularLocation>
    <text evidence="3">Localized in the Golgi in the absence of bound proteins with the sequence motif K-D-E-L. Trafficks back to the endoplasmic reticulum together with cargo proteins containing the sequence motif K-D-E-L.</text>
</comment>
<comment type="PTM">
    <text evidence="2">Phosphorylation by PKA at Ser-209 is required for endoplasmic reticulum retention function.</text>
</comment>
<comment type="similarity">
    <text evidence="7">Belongs to the ERD2 family.</text>
</comment>
<reference key="1">
    <citation type="submission" date="2001-02" db="EMBL/GenBank/DDBJ databases">
        <title>Cloning, expression and genomic structure of the murine KDEL receptor 1.</title>
        <authorList>
            <person name="Yamamoto K."/>
            <person name="Fujii R."/>
            <person name="Toyofuku Y."/>
            <person name="Koseki H."/>
            <person name="Aoe T."/>
        </authorList>
    </citation>
    <scope>NUCLEOTIDE SEQUENCE [MRNA]</scope>
    <source>
        <strain>C57BL/6J</strain>
    </source>
</reference>
<reference key="2">
    <citation type="submission" date="2000-05" db="EMBL/GenBank/DDBJ databases">
        <title>Full-length sequencing of some human and murine muscular transcripts (Telethon Italy project B41).</title>
        <authorList>
            <person name="Ievolella C."/>
            <person name="Negrisolo E."/>
            <person name="Lanfranchi G."/>
            <person name="Valle G."/>
        </authorList>
    </citation>
    <scope>NUCLEOTIDE SEQUENCE [MRNA]</scope>
    <source>
        <tissue>Skeletal muscle</tissue>
    </source>
</reference>
<reference key="3">
    <citation type="journal article" date="2004" name="Genome Res.">
        <title>The status, quality, and expansion of the NIH full-length cDNA project: the Mammalian Gene Collection (MGC).</title>
        <authorList>
            <consortium name="The MGC Project Team"/>
        </authorList>
    </citation>
    <scope>NUCLEOTIDE SEQUENCE [LARGE SCALE MRNA]</scope>
    <source>
        <strain>FVB/N-3</strain>
        <tissue>Mammary tumor</tissue>
    </source>
</reference>
<reference key="4">
    <citation type="journal article" date="2010" name="Cell">
        <title>A tissue-specific atlas of mouse protein phosphorylation and expression.</title>
        <authorList>
            <person name="Huttlin E.L."/>
            <person name="Jedrychowski M.P."/>
            <person name="Elias J.E."/>
            <person name="Goswami T."/>
            <person name="Rad R."/>
            <person name="Beausoleil S.A."/>
            <person name="Villen J."/>
            <person name="Haas W."/>
            <person name="Sowa M.E."/>
            <person name="Gygi S.P."/>
        </authorList>
    </citation>
    <scope>IDENTIFICATION BY MASS SPECTROMETRY [LARGE SCALE ANALYSIS]</scope>
    <source>
        <tissue>Brain</tissue>
        <tissue>Brown adipose tissue</tissue>
        <tissue>Heart</tissue>
        <tissue>Kidney</tissue>
        <tissue>Liver</tissue>
        <tissue>Lung</tissue>
        <tissue>Pancreas</tissue>
        <tissue>Spleen</tissue>
        <tissue>Testis</tissue>
    </source>
</reference>
<sequence>MNLFRFLGDLSHLLAIILLLLKIWKSRSCAGISGKSQVLFAVVFTARYLDLFTNYISLYNTCMKVVYIACSFTTVWMIYSKFKATYDGNHDTFRVEFLVVPTAILAFLVNHDFTPLEILWTFSIYLESVAILPQLFMVSKTGEAETITSHYLFALGVYRTLYLFNWIWRYHFEGFFDLIAIVAGLVQTVLYCDFFYLYITKVLKGKKLSLPA</sequence>